<organism>
    <name type="scientific">Haemophilus influenzae (strain 86-028NP)</name>
    <dbReference type="NCBI Taxonomy" id="281310"/>
    <lineage>
        <taxon>Bacteria</taxon>
        <taxon>Pseudomonadati</taxon>
        <taxon>Pseudomonadota</taxon>
        <taxon>Gammaproteobacteria</taxon>
        <taxon>Pasteurellales</taxon>
        <taxon>Pasteurellaceae</taxon>
        <taxon>Haemophilus</taxon>
    </lineage>
</organism>
<comment type="function">
    <text evidence="1">Activates ribosomal RNA transcription. Plays a direct role in upstream activation of rRNA promoters.</text>
</comment>
<comment type="subunit">
    <text evidence="1">Homodimer.</text>
</comment>
<comment type="similarity">
    <text evidence="1">Belongs to the transcriptional regulatory Fis family.</text>
</comment>
<sequence>MLEQQRNPADALTVSVLNAQSQVTSKPLRDSVKQALRNYLAQLDGQDVNDLYELVLAEVEHPMLDMIMQYTRGNQTRAANMLGINRGTLRKKLKKYGMG</sequence>
<gene>
    <name evidence="1" type="primary">fis</name>
    <name type="ordered locus">NTHI1152</name>
</gene>
<feature type="chain" id="PRO_1000023327" description="DNA-binding protein Fis">
    <location>
        <begin position="1"/>
        <end position="99"/>
    </location>
</feature>
<feature type="DNA-binding region" description="H-T-H motif" evidence="1">
    <location>
        <begin position="75"/>
        <end position="94"/>
    </location>
</feature>
<protein>
    <recommendedName>
        <fullName evidence="1">DNA-binding protein Fis</fullName>
    </recommendedName>
</protein>
<name>FIS_HAEI8</name>
<dbReference type="EMBL" id="CP000057">
    <property type="protein sequence ID" value="AAX88017.1"/>
    <property type="molecule type" value="Genomic_DNA"/>
</dbReference>
<dbReference type="RefSeq" id="WP_005647967.1">
    <property type="nucleotide sequence ID" value="NC_007146.2"/>
</dbReference>
<dbReference type="SMR" id="Q4QLT0"/>
<dbReference type="KEGG" id="hit:NTHI1152"/>
<dbReference type="HOGENOM" id="CLU_158040_3_0_6"/>
<dbReference type="Proteomes" id="UP000002525">
    <property type="component" value="Chromosome"/>
</dbReference>
<dbReference type="GO" id="GO:0003700">
    <property type="term" value="F:DNA-binding transcription factor activity"/>
    <property type="evidence" value="ECO:0007669"/>
    <property type="project" value="UniProtKB-UniRule"/>
</dbReference>
<dbReference type="GO" id="GO:0043565">
    <property type="term" value="F:sequence-specific DNA binding"/>
    <property type="evidence" value="ECO:0007669"/>
    <property type="project" value="InterPro"/>
</dbReference>
<dbReference type="FunFam" id="1.10.10.60:FF:000006">
    <property type="entry name" value="DNA-binding protein Fis"/>
    <property type="match status" value="1"/>
</dbReference>
<dbReference type="Gene3D" id="1.10.10.60">
    <property type="entry name" value="Homeodomain-like"/>
    <property type="match status" value="1"/>
</dbReference>
<dbReference type="HAMAP" id="MF_00166">
    <property type="entry name" value="DNA_binding_Fis"/>
    <property type="match status" value="1"/>
</dbReference>
<dbReference type="InterPro" id="IPR005412">
    <property type="entry name" value="Fis_DNA-bd"/>
</dbReference>
<dbReference type="InterPro" id="IPR009057">
    <property type="entry name" value="Homeodomain-like_sf"/>
</dbReference>
<dbReference type="InterPro" id="IPR002197">
    <property type="entry name" value="HTH_Fis"/>
</dbReference>
<dbReference type="InterPro" id="IPR050207">
    <property type="entry name" value="Trans_regulatory_Fis"/>
</dbReference>
<dbReference type="NCBIfam" id="NF001659">
    <property type="entry name" value="PRK00430.1"/>
    <property type="match status" value="1"/>
</dbReference>
<dbReference type="PANTHER" id="PTHR47918">
    <property type="entry name" value="DNA-BINDING PROTEIN FIS"/>
    <property type="match status" value="1"/>
</dbReference>
<dbReference type="PANTHER" id="PTHR47918:SF1">
    <property type="entry name" value="DNA-BINDING PROTEIN FIS"/>
    <property type="match status" value="1"/>
</dbReference>
<dbReference type="Pfam" id="PF02954">
    <property type="entry name" value="HTH_8"/>
    <property type="match status" value="1"/>
</dbReference>
<dbReference type="PIRSF" id="PIRSF002097">
    <property type="entry name" value="DNA-binding_Fis"/>
    <property type="match status" value="1"/>
</dbReference>
<dbReference type="PRINTS" id="PR01591">
    <property type="entry name" value="DNABINDNGFIS"/>
</dbReference>
<dbReference type="PRINTS" id="PR01590">
    <property type="entry name" value="HTHFIS"/>
</dbReference>
<dbReference type="SUPFAM" id="SSF46689">
    <property type="entry name" value="Homeodomain-like"/>
    <property type="match status" value="1"/>
</dbReference>
<evidence type="ECO:0000255" key="1">
    <source>
        <dbReference type="HAMAP-Rule" id="MF_00166"/>
    </source>
</evidence>
<accession>Q4QLT0</accession>
<proteinExistence type="inferred from homology"/>
<reference key="1">
    <citation type="journal article" date="2005" name="J. Bacteriol.">
        <title>Genomic sequence of an otitis media isolate of nontypeable Haemophilus influenzae: comparative study with H. influenzae serotype d, strain KW20.</title>
        <authorList>
            <person name="Harrison A."/>
            <person name="Dyer D.W."/>
            <person name="Gillaspy A."/>
            <person name="Ray W.C."/>
            <person name="Mungur R."/>
            <person name="Carson M.B."/>
            <person name="Zhong H."/>
            <person name="Gipson J."/>
            <person name="Gipson M."/>
            <person name="Johnson L.S."/>
            <person name="Lewis L."/>
            <person name="Bakaletz L.O."/>
            <person name="Munson R.S. Jr."/>
        </authorList>
    </citation>
    <scope>NUCLEOTIDE SEQUENCE [LARGE SCALE GENOMIC DNA]</scope>
    <source>
        <strain>86-028NP</strain>
    </source>
</reference>
<keyword id="KW-0010">Activator</keyword>
<keyword id="KW-0238">DNA-binding</keyword>
<keyword id="KW-0804">Transcription</keyword>
<keyword id="KW-0805">Transcription regulation</keyword>